<keyword id="KW-0028">Amino-acid biosynthesis</keyword>
<keyword id="KW-0057">Aromatic amino acid biosynthesis</keyword>
<keyword id="KW-0170">Cobalt</keyword>
<keyword id="KW-0963">Cytoplasm</keyword>
<keyword id="KW-0456">Lyase</keyword>
<keyword id="KW-0479">Metal-binding</keyword>
<keyword id="KW-0520">NAD</keyword>
<keyword id="KW-0547">Nucleotide-binding</keyword>
<keyword id="KW-0862">Zinc</keyword>
<sequence length="354" mass="38815">MAILNLDLGERSYPIYIDSGLINKTDLLSSHIRAKRVCIVTNDIVAPLYLDSLKAKLTDFEVDEVILPDGEAEKNLANFEVIISHLLTLEHGRDTTLIALGGGVIGDITGFAAACYQRGIDFIQIPTSLLSQVDSSVGGKTAVNHPLGKNMVGAFYQPKAVFIDIDSLTTLPIREFNAGMAEVIKYGILGDKEFFLWLEDNISAIKAGEKQVLAQMIEKCCQCKADIVASDEKESGVRALLNLGHTFGHAIEAEQGYGKWLHGEAVATGMVLAAKLALAMNLLEVSEFRRIEKLISAFDLPITAPKNMGFAEFIRHMRRDKKNIAGKLRFIIPTAIGQSEIRDDVTQDTLQEIL</sequence>
<accession>Q489N3</accession>
<protein>
    <recommendedName>
        <fullName evidence="1">3-dehydroquinate synthase</fullName>
        <shortName evidence="1">DHQS</shortName>
        <ecNumber evidence="1">4.2.3.4</ecNumber>
    </recommendedName>
</protein>
<feature type="chain" id="PRO_0000231080" description="3-dehydroquinate synthase">
    <location>
        <begin position="1"/>
        <end position="354"/>
    </location>
</feature>
<feature type="binding site" evidence="1">
    <location>
        <begin position="69"/>
        <end position="74"/>
    </location>
    <ligand>
        <name>NAD(+)</name>
        <dbReference type="ChEBI" id="CHEBI:57540"/>
    </ligand>
</feature>
<feature type="binding site" evidence="1">
    <location>
        <begin position="103"/>
        <end position="107"/>
    </location>
    <ligand>
        <name>NAD(+)</name>
        <dbReference type="ChEBI" id="CHEBI:57540"/>
    </ligand>
</feature>
<feature type="binding site" evidence="1">
    <location>
        <begin position="127"/>
        <end position="128"/>
    </location>
    <ligand>
        <name>NAD(+)</name>
        <dbReference type="ChEBI" id="CHEBI:57540"/>
    </ligand>
</feature>
<feature type="binding site" evidence="1">
    <location>
        <position position="140"/>
    </location>
    <ligand>
        <name>NAD(+)</name>
        <dbReference type="ChEBI" id="CHEBI:57540"/>
    </ligand>
</feature>
<feature type="binding site" evidence="1">
    <location>
        <position position="149"/>
    </location>
    <ligand>
        <name>NAD(+)</name>
        <dbReference type="ChEBI" id="CHEBI:57540"/>
    </ligand>
</feature>
<feature type="binding site" evidence="1">
    <location>
        <position position="182"/>
    </location>
    <ligand>
        <name>Zn(2+)</name>
        <dbReference type="ChEBI" id="CHEBI:29105"/>
    </ligand>
</feature>
<feature type="binding site" evidence="1">
    <location>
        <position position="245"/>
    </location>
    <ligand>
        <name>Zn(2+)</name>
        <dbReference type="ChEBI" id="CHEBI:29105"/>
    </ligand>
</feature>
<feature type="binding site" evidence="1">
    <location>
        <position position="262"/>
    </location>
    <ligand>
        <name>Zn(2+)</name>
        <dbReference type="ChEBI" id="CHEBI:29105"/>
    </ligand>
</feature>
<proteinExistence type="inferred from homology"/>
<dbReference type="EC" id="4.2.3.4" evidence="1"/>
<dbReference type="EMBL" id="CP000083">
    <property type="protein sequence ID" value="AAZ23956.1"/>
    <property type="molecule type" value="Genomic_DNA"/>
</dbReference>
<dbReference type="RefSeq" id="WP_011041334.1">
    <property type="nucleotide sequence ID" value="NC_003910.7"/>
</dbReference>
<dbReference type="SMR" id="Q489N3"/>
<dbReference type="STRING" id="167879.CPS_0473"/>
<dbReference type="KEGG" id="cps:CPS_0473"/>
<dbReference type="eggNOG" id="COG0337">
    <property type="taxonomic scope" value="Bacteria"/>
</dbReference>
<dbReference type="HOGENOM" id="CLU_001201_0_2_6"/>
<dbReference type="UniPathway" id="UPA00053">
    <property type="reaction ID" value="UER00085"/>
</dbReference>
<dbReference type="Proteomes" id="UP000000547">
    <property type="component" value="Chromosome"/>
</dbReference>
<dbReference type="GO" id="GO:0005737">
    <property type="term" value="C:cytoplasm"/>
    <property type="evidence" value="ECO:0007669"/>
    <property type="project" value="UniProtKB-SubCell"/>
</dbReference>
<dbReference type="GO" id="GO:0003856">
    <property type="term" value="F:3-dehydroquinate synthase activity"/>
    <property type="evidence" value="ECO:0007669"/>
    <property type="project" value="UniProtKB-UniRule"/>
</dbReference>
<dbReference type="GO" id="GO:0046872">
    <property type="term" value="F:metal ion binding"/>
    <property type="evidence" value="ECO:0007669"/>
    <property type="project" value="UniProtKB-KW"/>
</dbReference>
<dbReference type="GO" id="GO:0000166">
    <property type="term" value="F:nucleotide binding"/>
    <property type="evidence" value="ECO:0007669"/>
    <property type="project" value="UniProtKB-KW"/>
</dbReference>
<dbReference type="GO" id="GO:0008652">
    <property type="term" value="P:amino acid biosynthetic process"/>
    <property type="evidence" value="ECO:0007669"/>
    <property type="project" value="UniProtKB-KW"/>
</dbReference>
<dbReference type="GO" id="GO:0009073">
    <property type="term" value="P:aromatic amino acid family biosynthetic process"/>
    <property type="evidence" value="ECO:0007669"/>
    <property type="project" value="UniProtKB-KW"/>
</dbReference>
<dbReference type="GO" id="GO:0009423">
    <property type="term" value="P:chorismate biosynthetic process"/>
    <property type="evidence" value="ECO:0007669"/>
    <property type="project" value="UniProtKB-UniRule"/>
</dbReference>
<dbReference type="CDD" id="cd08195">
    <property type="entry name" value="DHQS"/>
    <property type="match status" value="1"/>
</dbReference>
<dbReference type="FunFam" id="1.20.1090.10:FF:000002">
    <property type="entry name" value="3-dehydroquinate synthase"/>
    <property type="match status" value="1"/>
</dbReference>
<dbReference type="FunFam" id="3.40.50.1970:FF:000001">
    <property type="entry name" value="3-dehydroquinate synthase"/>
    <property type="match status" value="1"/>
</dbReference>
<dbReference type="Gene3D" id="3.40.50.1970">
    <property type="match status" value="1"/>
</dbReference>
<dbReference type="Gene3D" id="1.20.1090.10">
    <property type="entry name" value="Dehydroquinate synthase-like - alpha domain"/>
    <property type="match status" value="1"/>
</dbReference>
<dbReference type="HAMAP" id="MF_00110">
    <property type="entry name" value="DHQ_synthase"/>
    <property type="match status" value="1"/>
</dbReference>
<dbReference type="InterPro" id="IPR050071">
    <property type="entry name" value="Dehydroquinate_synthase"/>
</dbReference>
<dbReference type="InterPro" id="IPR016037">
    <property type="entry name" value="DHQ_synth_AroB"/>
</dbReference>
<dbReference type="InterPro" id="IPR030963">
    <property type="entry name" value="DHQ_synth_fam"/>
</dbReference>
<dbReference type="InterPro" id="IPR030960">
    <property type="entry name" value="DHQS/DOIS_N"/>
</dbReference>
<dbReference type="InterPro" id="IPR056179">
    <property type="entry name" value="DHQS_C"/>
</dbReference>
<dbReference type="NCBIfam" id="TIGR01357">
    <property type="entry name" value="aroB"/>
    <property type="match status" value="1"/>
</dbReference>
<dbReference type="PANTHER" id="PTHR43622">
    <property type="entry name" value="3-DEHYDROQUINATE SYNTHASE"/>
    <property type="match status" value="1"/>
</dbReference>
<dbReference type="PANTHER" id="PTHR43622:SF7">
    <property type="entry name" value="3-DEHYDROQUINATE SYNTHASE, CHLOROPLASTIC"/>
    <property type="match status" value="1"/>
</dbReference>
<dbReference type="Pfam" id="PF01761">
    <property type="entry name" value="DHQ_synthase"/>
    <property type="match status" value="1"/>
</dbReference>
<dbReference type="Pfam" id="PF24621">
    <property type="entry name" value="DHQS_C"/>
    <property type="match status" value="1"/>
</dbReference>
<dbReference type="PIRSF" id="PIRSF001455">
    <property type="entry name" value="DHQ_synth"/>
    <property type="match status" value="1"/>
</dbReference>
<dbReference type="SUPFAM" id="SSF56796">
    <property type="entry name" value="Dehydroquinate synthase-like"/>
    <property type="match status" value="1"/>
</dbReference>
<evidence type="ECO:0000255" key="1">
    <source>
        <dbReference type="HAMAP-Rule" id="MF_00110"/>
    </source>
</evidence>
<gene>
    <name evidence="1" type="primary">aroB</name>
    <name type="ordered locus">CPS_0473</name>
</gene>
<reference key="1">
    <citation type="journal article" date="2005" name="Proc. Natl. Acad. Sci. U.S.A.">
        <title>The psychrophilic lifestyle as revealed by the genome sequence of Colwellia psychrerythraea 34H through genomic and proteomic analyses.</title>
        <authorList>
            <person name="Methe B.A."/>
            <person name="Nelson K.E."/>
            <person name="Deming J.W."/>
            <person name="Momen B."/>
            <person name="Melamud E."/>
            <person name="Zhang X."/>
            <person name="Moult J."/>
            <person name="Madupu R."/>
            <person name="Nelson W.C."/>
            <person name="Dodson R.J."/>
            <person name="Brinkac L.M."/>
            <person name="Daugherty S.C."/>
            <person name="Durkin A.S."/>
            <person name="DeBoy R.T."/>
            <person name="Kolonay J.F."/>
            <person name="Sullivan S.A."/>
            <person name="Zhou L."/>
            <person name="Davidsen T.M."/>
            <person name="Wu M."/>
            <person name="Huston A.L."/>
            <person name="Lewis M."/>
            <person name="Weaver B."/>
            <person name="Weidman J.F."/>
            <person name="Khouri H."/>
            <person name="Utterback T.R."/>
            <person name="Feldblyum T.V."/>
            <person name="Fraser C.M."/>
        </authorList>
    </citation>
    <scope>NUCLEOTIDE SEQUENCE [LARGE SCALE GENOMIC DNA]</scope>
    <source>
        <strain>34H / ATCC BAA-681</strain>
    </source>
</reference>
<name>AROB_COLP3</name>
<comment type="function">
    <text evidence="1">Catalyzes the conversion of 3-deoxy-D-arabino-heptulosonate 7-phosphate (DAHP) to dehydroquinate (DHQ).</text>
</comment>
<comment type="catalytic activity">
    <reaction evidence="1">
        <text>7-phospho-2-dehydro-3-deoxy-D-arabino-heptonate = 3-dehydroquinate + phosphate</text>
        <dbReference type="Rhea" id="RHEA:21968"/>
        <dbReference type="ChEBI" id="CHEBI:32364"/>
        <dbReference type="ChEBI" id="CHEBI:43474"/>
        <dbReference type="ChEBI" id="CHEBI:58394"/>
        <dbReference type="EC" id="4.2.3.4"/>
    </reaction>
</comment>
<comment type="cofactor">
    <cofactor evidence="1">
        <name>Co(2+)</name>
        <dbReference type="ChEBI" id="CHEBI:48828"/>
    </cofactor>
    <cofactor evidence="1">
        <name>Zn(2+)</name>
        <dbReference type="ChEBI" id="CHEBI:29105"/>
    </cofactor>
    <text evidence="1">Binds 1 divalent metal cation per subunit. Can use either Co(2+) or Zn(2+).</text>
</comment>
<comment type="cofactor">
    <cofactor evidence="1">
        <name>NAD(+)</name>
        <dbReference type="ChEBI" id="CHEBI:57540"/>
    </cofactor>
</comment>
<comment type="pathway">
    <text evidence="1">Metabolic intermediate biosynthesis; chorismate biosynthesis; chorismate from D-erythrose 4-phosphate and phosphoenolpyruvate: step 2/7.</text>
</comment>
<comment type="subcellular location">
    <subcellularLocation>
        <location evidence="1">Cytoplasm</location>
    </subcellularLocation>
</comment>
<comment type="similarity">
    <text evidence="1">Belongs to the sugar phosphate cyclases superfamily. Dehydroquinate synthase family.</text>
</comment>
<organism>
    <name type="scientific">Colwellia psychrerythraea (strain 34H / ATCC BAA-681)</name>
    <name type="common">Vibrio psychroerythus</name>
    <dbReference type="NCBI Taxonomy" id="167879"/>
    <lineage>
        <taxon>Bacteria</taxon>
        <taxon>Pseudomonadati</taxon>
        <taxon>Pseudomonadota</taxon>
        <taxon>Gammaproteobacteria</taxon>
        <taxon>Alteromonadales</taxon>
        <taxon>Colwelliaceae</taxon>
        <taxon>Colwellia</taxon>
    </lineage>
</organism>